<evidence type="ECO:0000250" key="1"/>
<evidence type="ECO:0000250" key="2">
    <source>
        <dbReference type="UniProtKB" id="P42575"/>
    </source>
</evidence>
<evidence type="ECO:0000255" key="3">
    <source>
        <dbReference type="PROSITE-ProRule" id="PRU00046"/>
    </source>
</evidence>
<evidence type="ECO:0000256" key="4">
    <source>
        <dbReference type="SAM" id="MobiDB-lite"/>
    </source>
</evidence>
<evidence type="ECO:0000303" key="5">
    <source>
    </source>
</evidence>
<evidence type="ECO:0000305" key="6"/>
<protein>
    <recommendedName>
        <fullName>Caspase-2</fullName>
        <shortName>CASP-2</shortName>
        <ecNumber>3.4.22.55</ecNumber>
    </recommendedName>
    <alternativeName>
        <fullName>ICH-1L/1S</fullName>
    </alternativeName>
    <alternativeName>
        <fullName>Protease ICH-1</fullName>
    </alternativeName>
    <component>
        <recommendedName>
            <fullName>Caspase-2 subunit p18</fullName>
        </recommendedName>
    </component>
    <component>
        <recommendedName>
            <fullName>Caspase-2 subunit p13</fullName>
        </recommendedName>
    </component>
    <component>
        <recommendedName>
            <fullName>Caspase-2 subunit p12</fullName>
        </recommendedName>
    </component>
</protein>
<dbReference type="EC" id="3.4.22.55"/>
<dbReference type="EMBL" id="U64963">
    <property type="protein sequence ID" value="AAC29881.1"/>
    <property type="status" value="ALT_INIT"/>
    <property type="molecule type" value="mRNA"/>
</dbReference>
<dbReference type="RefSeq" id="NP_001161173.2">
    <molecule id="Q98943-1"/>
    <property type="nucleotide sequence ID" value="NM_001167701.2"/>
</dbReference>
<dbReference type="RefSeq" id="XP_015148709.2">
    <molecule id="Q98943-1"/>
    <property type="nucleotide sequence ID" value="XM_015293223.3"/>
</dbReference>
<dbReference type="RefSeq" id="XP_046762690.1">
    <molecule id="Q98943-1"/>
    <property type="nucleotide sequence ID" value="XM_046906734.1"/>
</dbReference>
<dbReference type="RefSeq" id="XP_046762691.1">
    <molecule id="Q98943-1"/>
    <property type="nucleotide sequence ID" value="XM_046906735.1"/>
</dbReference>
<dbReference type="RefSeq" id="XP_046765357.1">
    <molecule id="Q98943-1"/>
    <property type="nucleotide sequence ID" value="XM_046909401.1"/>
</dbReference>
<dbReference type="SMR" id="Q98943"/>
<dbReference type="FunCoup" id="Q98943">
    <property type="interactions" value="1739"/>
</dbReference>
<dbReference type="STRING" id="9031.ENSGALP00000029853"/>
<dbReference type="MEROPS" id="C14.006"/>
<dbReference type="PaxDb" id="9031-ENSGALP00000029853"/>
<dbReference type="Ensembl" id="ENSGALT00010058668.1">
    <molecule id="Q98943-2"/>
    <property type="protein sequence ID" value="ENSGALP00010035671.1"/>
    <property type="gene ID" value="ENSGALG00010024068.1"/>
</dbReference>
<dbReference type="Ensembl" id="ENSGALT00010058670.1">
    <molecule id="Q98943-1"/>
    <property type="protein sequence ID" value="ENSGALP00010035672.1"/>
    <property type="gene ID" value="ENSGALG00010024068.1"/>
</dbReference>
<dbReference type="GeneID" id="395857"/>
<dbReference type="KEGG" id="gga:395857"/>
<dbReference type="CTD" id="835"/>
<dbReference type="VEuPathDB" id="HostDB:geneid_395857"/>
<dbReference type="eggNOG" id="KOG3573">
    <property type="taxonomic scope" value="Eukaryota"/>
</dbReference>
<dbReference type="GeneTree" id="ENSGT00940000156657"/>
<dbReference type="InParanoid" id="Q98943"/>
<dbReference type="OMA" id="VCYANTP"/>
<dbReference type="OrthoDB" id="10004338at2759"/>
<dbReference type="PhylomeDB" id="Q98943"/>
<dbReference type="BRENDA" id="3.4.22.55">
    <property type="organism ID" value="1306"/>
</dbReference>
<dbReference type="PRO" id="PR:Q98943"/>
<dbReference type="Proteomes" id="UP000000539">
    <property type="component" value="Chromosome 1"/>
</dbReference>
<dbReference type="GO" id="GO:0005737">
    <property type="term" value="C:cytoplasm"/>
    <property type="evidence" value="ECO:0000318"/>
    <property type="project" value="GO_Central"/>
</dbReference>
<dbReference type="GO" id="GO:1905369">
    <property type="term" value="C:endopeptidase complex"/>
    <property type="evidence" value="ECO:0007669"/>
    <property type="project" value="Ensembl"/>
</dbReference>
<dbReference type="GO" id="GO:0005634">
    <property type="term" value="C:nucleus"/>
    <property type="evidence" value="ECO:0007669"/>
    <property type="project" value="Ensembl"/>
</dbReference>
<dbReference type="GO" id="GO:0004197">
    <property type="term" value="F:cysteine-type endopeptidase activity"/>
    <property type="evidence" value="ECO:0000318"/>
    <property type="project" value="GO_Central"/>
</dbReference>
<dbReference type="GO" id="GO:0042802">
    <property type="term" value="F:identical protein binding"/>
    <property type="evidence" value="ECO:0007669"/>
    <property type="project" value="Ensembl"/>
</dbReference>
<dbReference type="GO" id="GO:0019904">
    <property type="term" value="F:protein domain specific binding"/>
    <property type="evidence" value="ECO:0007669"/>
    <property type="project" value="Ensembl"/>
</dbReference>
<dbReference type="GO" id="GO:0006915">
    <property type="term" value="P:apoptotic process"/>
    <property type="evidence" value="ECO:0000318"/>
    <property type="project" value="GO_Central"/>
</dbReference>
<dbReference type="GO" id="GO:0071260">
    <property type="term" value="P:cellular response to mechanical stimulus"/>
    <property type="evidence" value="ECO:0007669"/>
    <property type="project" value="Ensembl"/>
</dbReference>
<dbReference type="GO" id="GO:0030330">
    <property type="term" value="P:DNA damage response, signal transduction by p53 class mediator"/>
    <property type="evidence" value="ECO:0007669"/>
    <property type="project" value="Ensembl"/>
</dbReference>
<dbReference type="GO" id="GO:0035234">
    <property type="term" value="P:ectopic germ cell programmed cell death"/>
    <property type="evidence" value="ECO:0007669"/>
    <property type="project" value="Ensembl"/>
</dbReference>
<dbReference type="GO" id="GO:0097192">
    <property type="term" value="P:extrinsic apoptotic signaling pathway in absence of ligand"/>
    <property type="evidence" value="ECO:0000318"/>
    <property type="project" value="GO_Central"/>
</dbReference>
<dbReference type="GO" id="GO:0008630">
    <property type="term" value="P:intrinsic apoptotic signaling pathway in response to DNA damage"/>
    <property type="evidence" value="ECO:0000318"/>
    <property type="project" value="GO_Central"/>
</dbReference>
<dbReference type="GO" id="GO:2001235">
    <property type="term" value="P:positive regulation of apoptotic signaling pathway"/>
    <property type="evidence" value="ECO:0007669"/>
    <property type="project" value="Ensembl"/>
</dbReference>
<dbReference type="GO" id="GO:0043525">
    <property type="term" value="P:positive regulation of neuron apoptotic process"/>
    <property type="evidence" value="ECO:0000318"/>
    <property type="project" value="GO_Central"/>
</dbReference>
<dbReference type="GO" id="GO:0016485">
    <property type="term" value="P:protein processing"/>
    <property type="evidence" value="ECO:0007669"/>
    <property type="project" value="Ensembl"/>
</dbReference>
<dbReference type="CDD" id="cd08332">
    <property type="entry name" value="CARD_CASP2"/>
    <property type="match status" value="1"/>
</dbReference>
<dbReference type="CDD" id="cd00032">
    <property type="entry name" value="CASc"/>
    <property type="match status" value="1"/>
</dbReference>
<dbReference type="FunFam" id="3.40.50.1460:FF:000009">
    <property type="entry name" value="Caspase 2"/>
    <property type="match status" value="1"/>
</dbReference>
<dbReference type="FunFam" id="1.10.533.10:FF:000024">
    <property type="entry name" value="caspase-2 isoform X1"/>
    <property type="match status" value="1"/>
</dbReference>
<dbReference type="FunFam" id="3.30.70.1470:FF:000001">
    <property type="entry name" value="Putative caspase-2"/>
    <property type="match status" value="1"/>
</dbReference>
<dbReference type="Gene3D" id="3.40.50.1460">
    <property type="match status" value="1"/>
</dbReference>
<dbReference type="Gene3D" id="3.30.70.1470">
    <property type="entry name" value="Caspase-like"/>
    <property type="match status" value="1"/>
</dbReference>
<dbReference type="Gene3D" id="1.10.533.10">
    <property type="entry name" value="Death Domain, Fas"/>
    <property type="match status" value="1"/>
</dbReference>
<dbReference type="InterPro" id="IPR001315">
    <property type="entry name" value="CARD"/>
</dbReference>
<dbReference type="InterPro" id="IPR035702">
    <property type="entry name" value="CASP2_CARD"/>
</dbReference>
<dbReference type="InterPro" id="IPR029030">
    <property type="entry name" value="Caspase-like_dom_sf"/>
</dbReference>
<dbReference type="InterPro" id="IPR033139">
    <property type="entry name" value="Caspase_cys_AS"/>
</dbReference>
<dbReference type="InterPro" id="IPR016129">
    <property type="entry name" value="Caspase_his_AS"/>
</dbReference>
<dbReference type="InterPro" id="IPR011029">
    <property type="entry name" value="DEATH-like_dom_sf"/>
</dbReference>
<dbReference type="InterPro" id="IPR002398">
    <property type="entry name" value="Pept_C14"/>
</dbReference>
<dbReference type="InterPro" id="IPR011600">
    <property type="entry name" value="Pept_C14_caspase"/>
</dbReference>
<dbReference type="InterPro" id="IPR002138">
    <property type="entry name" value="Pept_C14_p10"/>
</dbReference>
<dbReference type="InterPro" id="IPR001309">
    <property type="entry name" value="Pept_C14_p20"/>
</dbReference>
<dbReference type="InterPro" id="IPR015917">
    <property type="entry name" value="Pept_C14A"/>
</dbReference>
<dbReference type="PANTHER" id="PTHR47901:SF7">
    <property type="entry name" value="CASPASE 2"/>
    <property type="match status" value="1"/>
</dbReference>
<dbReference type="PANTHER" id="PTHR47901">
    <property type="entry name" value="CASPASE RECRUITMENT DOMAIN-CONTAINING PROTEIN 18"/>
    <property type="match status" value="1"/>
</dbReference>
<dbReference type="Pfam" id="PF00619">
    <property type="entry name" value="CARD"/>
    <property type="match status" value="1"/>
</dbReference>
<dbReference type="Pfam" id="PF00656">
    <property type="entry name" value="Peptidase_C14"/>
    <property type="match status" value="1"/>
</dbReference>
<dbReference type="PIRSF" id="PIRSF038001">
    <property type="entry name" value="Caspase_ICE"/>
    <property type="match status" value="1"/>
</dbReference>
<dbReference type="PRINTS" id="PR00376">
    <property type="entry name" value="IL1BCENZYME"/>
</dbReference>
<dbReference type="SMART" id="SM00114">
    <property type="entry name" value="CARD"/>
    <property type="match status" value="1"/>
</dbReference>
<dbReference type="SMART" id="SM00115">
    <property type="entry name" value="CASc"/>
    <property type="match status" value="1"/>
</dbReference>
<dbReference type="SUPFAM" id="SSF52129">
    <property type="entry name" value="Caspase-like"/>
    <property type="match status" value="1"/>
</dbReference>
<dbReference type="SUPFAM" id="SSF47986">
    <property type="entry name" value="DEATH domain"/>
    <property type="match status" value="1"/>
</dbReference>
<dbReference type="PROSITE" id="PS50209">
    <property type="entry name" value="CARD"/>
    <property type="match status" value="1"/>
</dbReference>
<dbReference type="PROSITE" id="PS01122">
    <property type="entry name" value="CASPASE_CYS"/>
    <property type="match status" value="1"/>
</dbReference>
<dbReference type="PROSITE" id="PS01121">
    <property type="entry name" value="CASPASE_HIS"/>
    <property type="match status" value="1"/>
</dbReference>
<dbReference type="PROSITE" id="PS50207">
    <property type="entry name" value="CASPASE_P10"/>
    <property type="match status" value="1"/>
</dbReference>
<dbReference type="PROSITE" id="PS50208">
    <property type="entry name" value="CASPASE_P20"/>
    <property type="match status" value="1"/>
</dbReference>
<accession>Q98943</accession>
<keyword id="KW-0025">Alternative splicing</keyword>
<keyword id="KW-0053">Apoptosis</keyword>
<keyword id="KW-0378">Hydrolase</keyword>
<keyword id="KW-0645">Protease</keyword>
<keyword id="KW-1185">Reference proteome</keyword>
<keyword id="KW-0788">Thiol protease</keyword>
<keyword id="KW-0865">Zymogen</keyword>
<comment type="function">
    <text evidence="2">Involved in the activation cascade of caspases responsible for apoptosis execution. Might function by either activating some proteins required for cell death or inactivating proteins necessary for cell survival.</text>
</comment>
<comment type="catalytic activity">
    <reaction>
        <text>Strict requirement for an Asp residue at P1, with 316-Asp being essential for proteolytic activity and has a preferred cleavage sequence of Val-Asp-Val-Ala-Asp-|-.</text>
        <dbReference type="EC" id="3.4.22.55"/>
    </reaction>
</comment>
<comment type="subunit">
    <text evidence="2">Heterotetramer that consists of two anti-parallel arranged heterodimers, each one formed by a p18 subunit and a p12 subunit.</text>
</comment>
<comment type="alternative products">
    <event type="alternative splicing"/>
    <isoform>
        <id>Q98943-1</id>
        <name>ICH-1L</name>
        <sequence type="displayed"/>
    </isoform>
    <isoform>
        <id>Q98943-2</id>
        <name>ICH-1S</name>
        <sequence type="described" ref="VSP_000803 VSP_000804"/>
    </isoform>
</comment>
<comment type="miscellaneous">
    <molecule>Isoform ICH-1L</molecule>
    <text>Only form found in the ovary.</text>
</comment>
<comment type="similarity">
    <text evidence="6">Belongs to the peptidase C14A family.</text>
</comment>
<comment type="sequence caution" evidence="6">
    <conflict type="erroneous initiation">
        <sequence resource="EMBL-CDS" id="AAC29881"/>
    </conflict>
</comment>
<feature type="propeptide" id="PRO_0000004553" evidence="1">
    <location>
        <begin position="1"/>
        <end position="140"/>
    </location>
</feature>
<feature type="chain" id="PRO_0000004554" description="Caspase-2 subunit p18" evidence="1">
    <location>
        <begin position="141"/>
        <end position="308"/>
    </location>
</feature>
<feature type="chain" id="PRO_0000004555" description="Caspase-2 subunit p13" evidence="1">
    <location>
        <begin position="309"/>
        <end position="424"/>
    </location>
</feature>
<feature type="chain" id="PRO_0000004556" description="Caspase-2 subunit p12" evidence="1">
    <location>
        <begin position="315"/>
        <end position="424"/>
    </location>
</feature>
<feature type="domain" description="CARD" evidence="3">
    <location>
        <begin position="7"/>
        <end position="96"/>
    </location>
</feature>
<feature type="region of interest" description="Disordered" evidence="4">
    <location>
        <begin position="296"/>
        <end position="325"/>
    </location>
</feature>
<feature type="compositionally biased region" description="Basic and acidic residues" evidence="4">
    <location>
        <begin position="296"/>
        <end position="310"/>
    </location>
</feature>
<feature type="active site" evidence="1">
    <location>
        <position position="248"/>
    </location>
</feature>
<feature type="active site" evidence="1">
    <location>
        <position position="291"/>
    </location>
</feature>
<feature type="splice variant" id="VSP_000803" description="In isoform ICH-1S." evidence="5">
    <location>
        <begin position="1"/>
        <end position="6"/>
    </location>
</feature>
<feature type="splice variant" id="VSP_000804" description="In isoform ICH-1S." evidence="5">
    <original>DETDRGVDQRDGKERSDSPGCEESDANKEENLKLRLPTRSDMICGYACLKGTAAMRNTKRGSWYIEALTTVFAEDSRDTHVADMLVKVNRQIKQREGYAPGTEFHRCKEMSEYCSTLCRDLYLFPGYVPGK</original>
    <variation>GVSGIHIHLPLPCCCHCICCSMRQTGEWIREMAKNGQIPQAVRRVMQTRKKISSCVCLHAPI</variation>
    <location>
        <begin position="294"/>
        <end position="424"/>
    </location>
</feature>
<name>CASP2_CHICK</name>
<sequence length="424" mass="47960">MLGACGMQRYHQEALKKNRVMLARELVLKELMEHMIEKDIITIEMVEMIQAKSGSFSQNVEFLNLLPKRGPNAFSAFCEALQETKQQHLAEMILKTESSLRHGIATLEQRYGSNLPLPLSESCNSKRPRLIVEHSLDSGDGPPIPPVKHCTPEFYRDHQHLAYKLISEPRGLALILSNIHFSSEKDLEYRSGGDVDCASLELLFKHLGYQVTVFHDQSAEEMESALERFSKLPDHQDVDSCIVALLSHGVEGGVYGTDGKLLQLQEAFRLFDNANCPNLQNKPKMFFIQACRGDETDRGVDQRDGKERSDSPGCEESDANKEENLKLRLPTRSDMICGYACLKGTAAMRNTKRGSWYIEALTTVFAEDSRDTHVADMLVKVNRQIKQREGYAPGTEFHRCKEMSEYCSTLCRDLYLFPGYVPGK</sequence>
<proteinExistence type="evidence at transcript level"/>
<gene>
    <name type="primary">CASP2</name>
    <name type="synonym">ICH1</name>
</gene>
<organism>
    <name type="scientific">Gallus gallus</name>
    <name type="common">Chicken</name>
    <dbReference type="NCBI Taxonomy" id="9031"/>
    <lineage>
        <taxon>Eukaryota</taxon>
        <taxon>Metazoa</taxon>
        <taxon>Chordata</taxon>
        <taxon>Craniata</taxon>
        <taxon>Vertebrata</taxon>
        <taxon>Euteleostomi</taxon>
        <taxon>Archelosauria</taxon>
        <taxon>Archosauria</taxon>
        <taxon>Dinosauria</taxon>
        <taxon>Saurischia</taxon>
        <taxon>Theropoda</taxon>
        <taxon>Coelurosauria</taxon>
        <taxon>Aves</taxon>
        <taxon>Neognathae</taxon>
        <taxon>Galloanserae</taxon>
        <taxon>Galliformes</taxon>
        <taxon>Phasianidae</taxon>
        <taxon>Phasianinae</taxon>
        <taxon>Gallus</taxon>
    </lineage>
</organism>
<reference key="1">
    <citation type="journal article" date="1997" name="Gene">
        <title>Characterization of the avian Ich-1 cDNA and expression of Ich-1L mRNA in the hen ovary.</title>
        <authorList>
            <person name="Johnson A.L."/>
            <person name="Bridgham J.T."/>
            <person name="Bergeron L."/>
            <person name="Yuan J."/>
        </authorList>
    </citation>
    <scope>NUCLEOTIDE SEQUENCE [MRNA] (ISOFORMS ICH-1L AND ICH-1S)</scope>
    <source>
        <strain>White leghorn</strain>
        <tissue>Ovarian granulosa cell</tissue>
    </source>
</reference>